<protein>
    <recommendedName>
        <fullName>Putative GPI-anchored protein YAR066W</fullName>
    </recommendedName>
</protein>
<accession>P0CX18</accession>
<accession>D3DLG5</accession>
<accession>P38897</accession>
<accession>Q7LII8</accession>
<evidence type="ECO:0000255" key="1"/>
<evidence type="ECO:0000305" key="2"/>
<reference key="1">
    <citation type="submission" date="1994-02" db="EMBL/GenBank/DDBJ databases">
        <title>Sequencing of chromosome I of Saccharomyces cerevisiae: analysis of the 52 Kbp CDC15-FLO1-PHO11-YAR074 region.</title>
        <authorList>
            <person name="Bussey H."/>
            <person name="Keng T."/>
            <person name="Storms R.K."/>
            <person name="Vo D."/>
            <person name="Zhong W."/>
            <person name="Fortin N."/>
            <person name="Barton A.B."/>
            <person name="Kaback D.B."/>
            <person name="Clark M.W."/>
        </authorList>
    </citation>
    <scope>NUCLEOTIDE SEQUENCE [GENOMIC DNA]</scope>
    <source>
        <strain>ATCC 204511 / S288c / AB972</strain>
    </source>
</reference>
<reference key="2">
    <citation type="journal article" date="1995" name="Proc. Natl. Acad. Sci. U.S.A.">
        <title>The nucleotide sequence of chromosome I from Saccharomyces cerevisiae.</title>
        <authorList>
            <person name="Bussey H."/>
            <person name="Kaback D.B."/>
            <person name="Zhong W.-W."/>
            <person name="Vo D.H."/>
            <person name="Clark M.W."/>
            <person name="Fortin N."/>
            <person name="Hall J."/>
            <person name="Ouellette B.F.F."/>
            <person name="Keng T."/>
            <person name="Barton A.B."/>
            <person name="Su Y."/>
            <person name="Davies C.J."/>
            <person name="Storms R.K."/>
        </authorList>
    </citation>
    <scope>NUCLEOTIDE SEQUENCE [LARGE SCALE GENOMIC DNA]</scope>
    <source>
        <strain>ATCC 204508 / S288c</strain>
    </source>
</reference>
<reference key="3">
    <citation type="journal article" date="2014" name="G3 (Bethesda)">
        <title>The reference genome sequence of Saccharomyces cerevisiae: Then and now.</title>
        <authorList>
            <person name="Engel S.R."/>
            <person name="Dietrich F.S."/>
            <person name="Fisk D.G."/>
            <person name="Binkley G."/>
            <person name="Balakrishnan R."/>
            <person name="Costanzo M.C."/>
            <person name="Dwight S.S."/>
            <person name="Hitz B.C."/>
            <person name="Karra K."/>
            <person name="Nash R.S."/>
            <person name="Weng S."/>
            <person name="Wong E.D."/>
            <person name="Lloyd P."/>
            <person name="Skrzypek M.S."/>
            <person name="Miyasato S.R."/>
            <person name="Simison M."/>
            <person name="Cherry J.M."/>
        </authorList>
    </citation>
    <scope>GENOME REANNOTATION</scope>
    <source>
        <strain>ATCC 204508 / S288c</strain>
    </source>
</reference>
<reference key="4">
    <citation type="journal article" date="2007" name="Genome Res.">
        <title>Approaching a complete repository of sequence-verified protein-encoding clones for Saccharomyces cerevisiae.</title>
        <authorList>
            <person name="Hu Y."/>
            <person name="Rolfs A."/>
            <person name="Bhullar B."/>
            <person name="Murthy T.V.S."/>
            <person name="Zhu C."/>
            <person name="Berger M.F."/>
            <person name="Camargo A.A."/>
            <person name="Kelley F."/>
            <person name="McCarron S."/>
            <person name="Jepson D."/>
            <person name="Richardson A."/>
            <person name="Raphael J."/>
            <person name="Moreira D."/>
            <person name="Taycher E."/>
            <person name="Zuo D."/>
            <person name="Mohr S."/>
            <person name="Kane M.F."/>
            <person name="Williamson J."/>
            <person name="Simpson A.J.G."/>
            <person name="Bulyk M.L."/>
            <person name="Harlow E."/>
            <person name="Marsischky G."/>
            <person name="Kolodner R.D."/>
            <person name="LaBaer J."/>
        </authorList>
    </citation>
    <scope>NUCLEOTIDE SEQUENCE [GENOMIC DNA]</scope>
    <source>
        <strain>ATCC 204508 / S288c</strain>
    </source>
</reference>
<reference key="5">
    <citation type="journal article" date="2003" name="Yeast">
        <title>Genome-wide identification of fungal GPI proteins.</title>
        <authorList>
            <person name="De Groot P.W."/>
            <person name="Hellingwerf K.J."/>
            <person name="Klis F.M."/>
        </authorList>
    </citation>
    <scope>PREDICTION OF GPI-ANCHOR</scope>
</reference>
<feature type="signal peptide" evidence="1">
    <location>
        <begin position="1"/>
        <end position="23"/>
    </location>
</feature>
<feature type="chain" id="PRO_0000202945" description="Putative GPI-anchored protein YAR066W">
    <location>
        <begin position="24"/>
        <end position="184"/>
    </location>
</feature>
<feature type="propeptide" id="PRO_0000409753" description="Removed in mature form" evidence="1">
    <location>
        <begin position="185"/>
        <end position="203"/>
    </location>
</feature>
<feature type="lipid moiety-binding region" description="GPI-anchor amidated asparagine" evidence="1">
    <location>
        <position position="184"/>
    </location>
</feature>
<feature type="glycosylation site" description="N-linked (GlcNAc...) asparagine" evidence="1">
    <location>
        <position position="28"/>
    </location>
</feature>
<feature type="glycosylation site" description="N-linked (GlcNAc...) asparagine" evidence="1">
    <location>
        <position position="138"/>
    </location>
</feature>
<name>YA066_YEAST</name>
<comment type="subcellular location">
    <subcellularLocation>
        <location evidence="2">Cell membrane</location>
        <topology evidence="2">Lipid-anchor</topology>
        <topology evidence="2">GPI-anchor</topology>
    </subcellularLocation>
</comment>
<keyword id="KW-1003">Cell membrane</keyword>
<keyword id="KW-0325">Glycoprotein</keyword>
<keyword id="KW-0336">GPI-anchor</keyword>
<keyword id="KW-0449">Lipoprotein</keyword>
<keyword id="KW-0472">Membrane</keyword>
<keyword id="KW-1185">Reference proteome</keyword>
<keyword id="KW-0732">Signal</keyword>
<gene>
    <name type="ordered locus">YAR066W</name>
</gene>
<dbReference type="EMBL" id="L28920">
    <property type="protein sequence ID" value="AAC09510.1"/>
    <property type="molecule type" value="Genomic_DNA"/>
</dbReference>
<dbReference type="EMBL" id="AY692573">
    <property type="protein sequence ID" value="AAT92592.1"/>
    <property type="molecule type" value="Genomic_DNA"/>
</dbReference>
<dbReference type="EMBL" id="BK006935">
    <property type="protein sequence ID" value="DAA07009.1"/>
    <property type="molecule type" value="Genomic_DNA"/>
</dbReference>
<dbReference type="PIR" id="S48995">
    <property type="entry name" value="S48995"/>
</dbReference>
<dbReference type="RefSeq" id="NP_009430.1">
    <property type="nucleotide sequence ID" value="NM_001180045.1"/>
</dbReference>
<dbReference type="RefSeq" id="NP_012084.3">
    <property type="nucleotide sequence ID" value="NM_001179345.3"/>
</dbReference>
<dbReference type="SMR" id="P0CX18"/>
<dbReference type="BioGRID" id="31817">
    <property type="interactions" value="56"/>
</dbReference>
<dbReference type="BioGRID" id="36647">
    <property type="interactions" value="1"/>
</dbReference>
<dbReference type="FunCoup" id="P0CX18">
    <property type="interactions" value="63"/>
</dbReference>
<dbReference type="STRING" id="4932.YAR066W"/>
<dbReference type="GlyGen" id="P0CX18">
    <property type="glycosylation" value="2 sites"/>
</dbReference>
<dbReference type="PaxDb" id="4932-YAR066W"/>
<dbReference type="PeptideAtlas" id="P0CX18"/>
<dbReference type="EnsemblFungi" id="YAR066W_mRNA">
    <property type="protein sequence ID" value="YAR066W"/>
    <property type="gene ID" value="YAR066W"/>
</dbReference>
<dbReference type="EnsemblFungi" id="YHR214W_mRNA">
    <property type="protein sequence ID" value="YHR214W"/>
    <property type="gene ID" value="YHR214W"/>
</dbReference>
<dbReference type="GeneID" id="851295"/>
<dbReference type="KEGG" id="sce:YAR066W"/>
<dbReference type="KEGG" id="sce:YHR214W"/>
<dbReference type="AGR" id="SGD:S000002144"/>
<dbReference type="SGD" id="S000002144">
    <property type="gene designation" value="YAR066W"/>
</dbReference>
<dbReference type="VEuPathDB" id="FungiDB:YAR066W"/>
<dbReference type="VEuPathDB" id="FungiDB:YHR214W"/>
<dbReference type="HOGENOM" id="CLU_077759_1_0_1"/>
<dbReference type="InParanoid" id="P0CX18"/>
<dbReference type="OMA" id="QSXSSXS"/>
<dbReference type="OrthoDB" id="4067907at2759"/>
<dbReference type="BioCyc" id="YEAST:G3O-28895-MONOMER"/>
<dbReference type="PRO" id="PR:P0CX18"/>
<dbReference type="Proteomes" id="UP000002311">
    <property type="component" value="Chromosome I"/>
</dbReference>
<dbReference type="RNAct" id="P0CX18">
    <property type="molecule type" value="protein"/>
</dbReference>
<dbReference type="ExpressionAtlas" id="P0CX18">
    <property type="expression patterns" value="baseline and differential"/>
</dbReference>
<dbReference type="GO" id="GO:0005886">
    <property type="term" value="C:plasma membrane"/>
    <property type="evidence" value="ECO:0007669"/>
    <property type="project" value="UniProtKB-SubCell"/>
</dbReference>
<dbReference type="GO" id="GO:0098552">
    <property type="term" value="C:side of membrane"/>
    <property type="evidence" value="ECO:0007669"/>
    <property type="project" value="UniProtKB-KW"/>
</dbReference>
<organism>
    <name type="scientific">Saccharomyces cerevisiae (strain ATCC 204508 / S288c)</name>
    <name type="common">Baker's yeast</name>
    <dbReference type="NCBI Taxonomy" id="559292"/>
    <lineage>
        <taxon>Eukaryota</taxon>
        <taxon>Fungi</taxon>
        <taxon>Dikarya</taxon>
        <taxon>Ascomycota</taxon>
        <taxon>Saccharomycotina</taxon>
        <taxon>Saccharomycetes</taxon>
        <taxon>Saccharomycetales</taxon>
        <taxon>Saccharomycetaceae</taxon>
        <taxon>Saccharomyces</taxon>
    </lineage>
</organism>
<proteinExistence type="evidence at protein level"/>
<sequence length="203" mass="20594">MFNRFNKFQAAVALALLSRGALGDSYTNSTSSADLSSITSVSSASASATASDSLSSSDGTVYLPSTTISGDLTVTGKVIATEAVEVAAGGKLTLLDGEKYVFSSDLKVHGDLVVEKSEASYEGTAFDVSGETFEVSGNFSAEETGAVSASIYSFTPSSFKSSGDISLSLSKAKKGEVTFSPYSNAGTFSLSNAILNGGSVSGL</sequence>